<organism>
    <name type="scientific">Yersinia pestis bv. Antiqua (strain Angola)</name>
    <dbReference type="NCBI Taxonomy" id="349746"/>
    <lineage>
        <taxon>Bacteria</taxon>
        <taxon>Pseudomonadati</taxon>
        <taxon>Pseudomonadota</taxon>
        <taxon>Gammaproteobacteria</taxon>
        <taxon>Enterobacterales</taxon>
        <taxon>Yersiniaceae</taxon>
        <taxon>Yersinia</taxon>
    </lineage>
</organism>
<evidence type="ECO:0000255" key="1">
    <source>
        <dbReference type="HAMAP-Rule" id="MF_01166"/>
    </source>
</evidence>
<comment type="function">
    <text evidence="1">Bifunctional enzyme that catalyzes the oxidative decarboxylation of UDP-glucuronic acid (UDP-GlcUA) to UDP-4-keto-arabinose (UDP-Ara4O) and the addition of a formyl group to UDP-4-amino-4-deoxy-L-arabinose (UDP-L-Ara4N) to form UDP-L-4-formamido-arabinose (UDP-L-Ara4FN). The modified arabinose is attached to lipid A and is required for resistance to polymyxin and cationic antimicrobial peptides.</text>
</comment>
<comment type="catalytic activity">
    <reaction evidence="1">
        <text>UDP-alpha-D-glucuronate + NAD(+) = UDP-beta-L-threo-pentopyranos-4-ulose + CO2 + NADH</text>
        <dbReference type="Rhea" id="RHEA:24702"/>
        <dbReference type="ChEBI" id="CHEBI:16526"/>
        <dbReference type="ChEBI" id="CHEBI:57540"/>
        <dbReference type="ChEBI" id="CHEBI:57945"/>
        <dbReference type="ChEBI" id="CHEBI:58052"/>
        <dbReference type="ChEBI" id="CHEBI:58710"/>
        <dbReference type="EC" id="1.1.1.305"/>
    </reaction>
</comment>
<comment type="catalytic activity">
    <reaction evidence="1">
        <text>UDP-4-amino-4-deoxy-beta-L-arabinose + (6R)-10-formyltetrahydrofolate = UDP-4-deoxy-4-formamido-beta-L-arabinose + (6S)-5,6,7,8-tetrahydrofolate + H(+)</text>
        <dbReference type="Rhea" id="RHEA:24706"/>
        <dbReference type="ChEBI" id="CHEBI:15378"/>
        <dbReference type="ChEBI" id="CHEBI:57453"/>
        <dbReference type="ChEBI" id="CHEBI:58708"/>
        <dbReference type="ChEBI" id="CHEBI:58709"/>
        <dbReference type="ChEBI" id="CHEBI:195366"/>
        <dbReference type="EC" id="2.1.2.13"/>
    </reaction>
</comment>
<comment type="pathway">
    <text evidence="1">Nucleotide-sugar biosynthesis; UDP-4-deoxy-4-formamido-beta-L-arabinose biosynthesis; UDP-4-deoxy-4-formamido-beta-L-arabinose from UDP-alpha-D-glucuronate: step 1/3.</text>
</comment>
<comment type="pathway">
    <text evidence="1">Nucleotide-sugar biosynthesis; UDP-4-deoxy-4-formamido-beta-L-arabinose biosynthesis; UDP-4-deoxy-4-formamido-beta-L-arabinose from UDP-alpha-D-glucuronate: step 3/3.</text>
</comment>
<comment type="pathway">
    <text evidence="1">Bacterial outer membrane biogenesis; lipopolysaccharide biosynthesis.</text>
</comment>
<comment type="subunit">
    <text evidence="1">Homohexamer, formed by a dimer of trimers.</text>
</comment>
<comment type="similarity">
    <text evidence="1">In the N-terminal section; belongs to the Fmt family. UDP-L-Ara4N formyltransferase subfamily.</text>
</comment>
<comment type="similarity">
    <text evidence="1">In the C-terminal section; belongs to the NAD(P)-dependent epimerase/dehydratase family. UDP-glucuronic acid decarboxylase subfamily.</text>
</comment>
<reference key="1">
    <citation type="journal article" date="2010" name="J. Bacteriol.">
        <title>Genome sequence of the deep-rooted Yersinia pestis strain Angola reveals new insights into the evolution and pangenome of the plague bacterium.</title>
        <authorList>
            <person name="Eppinger M."/>
            <person name="Worsham P.L."/>
            <person name="Nikolich M.P."/>
            <person name="Riley D.R."/>
            <person name="Sebastian Y."/>
            <person name="Mou S."/>
            <person name="Achtman M."/>
            <person name="Lindler L.E."/>
            <person name="Ravel J."/>
        </authorList>
    </citation>
    <scope>NUCLEOTIDE SEQUENCE [LARGE SCALE GENOMIC DNA]</scope>
    <source>
        <strain>Angola</strain>
    </source>
</reference>
<gene>
    <name evidence="1" type="primary">arnA</name>
    <name type="ordered locus">YpAngola_A2610</name>
</gene>
<protein>
    <recommendedName>
        <fullName evidence="1">Bifunctional polymyxin resistance protein ArnA</fullName>
    </recommendedName>
    <domain>
        <recommendedName>
            <fullName evidence="1">UDP-4-amino-4-deoxy-L-arabinose formyltransferase</fullName>
            <ecNumber evidence="1">2.1.2.13</ecNumber>
        </recommendedName>
        <alternativeName>
            <fullName evidence="1">ArnAFT</fullName>
        </alternativeName>
        <alternativeName>
            <fullName evidence="1">UDP-L-Ara4N formyltransferase</fullName>
        </alternativeName>
    </domain>
    <domain>
        <recommendedName>
            <fullName evidence="1">UDP-glucuronic acid oxidase, UDP-4-keto-hexauronic acid decarboxylating</fullName>
            <ecNumber evidence="1">1.1.1.305</ecNumber>
        </recommendedName>
        <alternativeName>
            <fullName evidence="1">ArnADH</fullName>
        </alternativeName>
        <alternativeName>
            <fullName evidence="1">UDP-GlcUA decarboxylase</fullName>
        </alternativeName>
        <alternativeName>
            <fullName evidence="1">UDP-glucuronic acid dehydrogenase</fullName>
        </alternativeName>
    </domain>
</protein>
<accession>A9R093</accession>
<dbReference type="EC" id="2.1.2.13" evidence="1"/>
<dbReference type="EC" id="1.1.1.305" evidence="1"/>
<dbReference type="EMBL" id="CP000901">
    <property type="protein sequence ID" value="ABX86672.1"/>
    <property type="molecule type" value="Genomic_DNA"/>
</dbReference>
<dbReference type="RefSeq" id="WP_002211823.1">
    <property type="nucleotide sequence ID" value="NZ_CP009935.1"/>
</dbReference>
<dbReference type="SMR" id="A9R093"/>
<dbReference type="GeneID" id="57976257"/>
<dbReference type="KEGG" id="ypg:YpAngola_A2610"/>
<dbReference type="PATRIC" id="fig|349746.12.peg.3637"/>
<dbReference type="UniPathway" id="UPA00030"/>
<dbReference type="UniPathway" id="UPA00032">
    <property type="reaction ID" value="UER00492"/>
</dbReference>
<dbReference type="UniPathway" id="UPA00032">
    <property type="reaction ID" value="UER00494"/>
</dbReference>
<dbReference type="GO" id="GO:0016020">
    <property type="term" value="C:membrane"/>
    <property type="evidence" value="ECO:0007669"/>
    <property type="project" value="GOC"/>
</dbReference>
<dbReference type="GO" id="GO:0016831">
    <property type="term" value="F:carboxy-lyase activity"/>
    <property type="evidence" value="ECO:0007669"/>
    <property type="project" value="InterPro"/>
</dbReference>
<dbReference type="GO" id="GO:0099619">
    <property type="term" value="F:UDP-4-amino-4-deoxy-L-arabinose formyltransferase activity"/>
    <property type="evidence" value="ECO:0007669"/>
    <property type="project" value="UniProtKB-EC"/>
</dbReference>
<dbReference type="GO" id="GO:0099618">
    <property type="term" value="F:UDP-glucuronate dehydrogenase activity"/>
    <property type="evidence" value="ECO:0007669"/>
    <property type="project" value="UniProtKB-EC"/>
</dbReference>
<dbReference type="GO" id="GO:0009245">
    <property type="term" value="P:lipid A biosynthetic process"/>
    <property type="evidence" value="ECO:0007669"/>
    <property type="project" value="UniProtKB-KW"/>
</dbReference>
<dbReference type="GO" id="GO:0009103">
    <property type="term" value="P:lipopolysaccharide biosynthetic process"/>
    <property type="evidence" value="ECO:0007669"/>
    <property type="project" value="UniProtKB-UniRule"/>
</dbReference>
<dbReference type="GO" id="GO:0046677">
    <property type="term" value="P:response to antibiotic"/>
    <property type="evidence" value="ECO:0007669"/>
    <property type="project" value="UniProtKB-KW"/>
</dbReference>
<dbReference type="CDD" id="cd08702">
    <property type="entry name" value="Arna_FMT_C"/>
    <property type="match status" value="1"/>
</dbReference>
<dbReference type="CDD" id="cd05257">
    <property type="entry name" value="Arna_like_SDR_e"/>
    <property type="match status" value="1"/>
</dbReference>
<dbReference type="FunFam" id="3.40.50.720:FF:000197">
    <property type="entry name" value="Bifunctional polymyxin resistance protein ArnA"/>
    <property type="match status" value="1"/>
</dbReference>
<dbReference type="Gene3D" id="3.40.50.12230">
    <property type="match status" value="1"/>
</dbReference>
<dbReference type="Gene3D" id="3.40.50.720">
    <property type="entry name" value="NAD(P)-binding Rossmann-like Domain"/>
    <property type="match status" value="1"/>
</dbReference>
<dbReference type="HAMAP" id="MF_01166">
    <property type="entry name" value="ArnA"/>
    <property type="match status" value="1"/>
</dbReference>
<dbReference type="InterPro" id="IPR045869">
    <property type="entry name" value="Arna-like_SDR_e"/>
</dbReference>
<dbReference type="InterPro" id="IPR021168">
    <property type="entry name" value="Bifun_polymyxin_resist_ArnA"/>
</dbReference>
<dbReference type="InterPro" id="IPR001509">
    <property type="entry name" value="Epimerase_deHydtase"/>
</dbReference>
<dbReference type="InterPro" id="IPR005793">
    <property type="entry name" value="Formyl_trans_C"/>
</dbReference>
<dbReference type="InterPro" id="IPR002376">
    <property type="entry name" value="Formyl_transf_N"/>
</dbReference>
<dbReference type="InterPro" id="IPR036477">
    <property type="entry name" value="Formyl_transf_N_sf"/>
</dbReference>
<dbReference type="InterPro" id="IPR011034">
    <property type="entry name" value="Formyl_transferase-like_C_sf"/>
</dbReference>
<dbReference type="InterPro" id="IPR050177">
    <property type="entry name" value="Lipid_A_modif_metabolic_enz"/>
</dbReference>
<dbReference type="InterPro" id="IPR036291">
    <property type="entry name" value="NAD(P)-bd_dom_sf"/>
</dbReference>
<dbReference type="NCBIfam" id="NF005414">
    <property type="entry name" value="PRK06988.1"/>
    <property type="match status" value="1"/>
</dbReference>
<dbReference type="NCBIfam" id="NF005998">
    <property type="entry name" value="PRK08125.1"/>
    <property type="match status" value="1"/>
</dbReference>
<dbReference type="NCBIfam" id="NF008872">
    <property type="entry name" value="PRK11908.1"/>
    <property type="match status" value="1"/>
</dbReference>
<dbReference type="PANTHER" id="PTHR43245">
    <property type="entry name" value="BIFUNCTIONAL POLYMYXIN RESISTANCE PROTEIN ARNA"/>
    <property type="match status" value="1"/>
</dbReference>
<dbReference type="PANTHER" id="PTHR43245:SF13">
    <property type="entry name" value="UDP-D-APIOSE_UDP-D-XYLOSE SYNTHASE 2"/>
    <property type="match status" value="1"/>
</dbReference>
<dbReference type="Pfam" id="PF01370">
    <property type="entry name" value="Epimerase"/>
    <property type="match status" value="1"/>
</dbReference>
<dbReference type="Pfam" id="PF02911">
    <property type="entry name" value="Formyl_trans_C"/>
    <property type="match status" value="1"/>
</dbReference>
<dbReference type="Pfam" id="PF00551">
    <property type="entry name" value="Formyl_trans_N"/>
    <property type="match status" value="1"/>
</dbReference>
<dbReference type="PIRSF" id="PIRSF036506">
    <property type="entry name" value="Bifun_polymyxin_resist_ArnA"/>
    <property type="match status" value="1"/>
</dbReference>
<dbReference type="SUPFAM" id="SSF50486">
    <property type="entry name" value="FMT C-terminal domain-like"/>
    <property type="match status" value="1"/>
</dbReference>
<dbReference type="SUPFAM" id="SSF53328">
    <property type="entry name" value="Formyltransferase"/>
    <property type="match status" value="1"/>
</dbReference>
<dbReference type="SUPFAM" id="SSF51735">
    <property type="entry name" value="NAD(P)-binding Rossmann-fold domains"/>
    <property type="match status" value="1"/>
</dbReference>
<name>ARNA_YERPG</name>
<sequence length="667" mass="74921">MKAIVFAYHDIGCVGLNALAEAGYDIQAVFTHTDNPGENRFFSSVARVAADLALPVFAPEDVNHPLWVERIRELQPDIIFSFYYRNMLSDEILSLAPQGGFNLHGSLLPQYRGRAPINWVLVNGETETGVTLHQMVKKADAGPIAGQYKVAISDVDTALTLHAKMRDAAQELLRNLLPRMKEGPLPLTPQKEADASYFGRRTAADGEIHWQKSAFTINNLVRAVTEPYPGAFSYLGQRKLTIWRSRPLDLVHNKLPGTVLSTAPLTVACGEGALEIITGQGEAGLYVQGDRLAQEMGIVTDVRLGNKPSNTLKRRTRVLILGVNGFIGNHLTERLLQDDRYEVYGLDIGSDAISRFLGNPAFHFVEGDISIHSEWIEYHIKKCDVILPLVAIATPIEYTRNPLRVFELDFEENLKIVRDCVKYNKRIVFPSTSEVYGMCDDKEFDEDTSRLIVGPINKQRWIYSVSKQLLDRVIWAYGVKEGLKFTLFRPFNWMGPRLDNLDAARIGSSRAITQLILNLVEGSPIKLVDGGAQKRCFTDIHDGIEALFRIIENRDGCCDGRIINIGNPTNEASIRELAEMLLTSFENHELRDHFPPFAGFKDIESSAYYGKGYQDVEYRTPSIKNARRILHWQPEIAMQQTVTETLDFFLRAAVIEKTAAPKDELNA</sequence>
<proteinExistence type="inferred from homology"/>
<keyword id="KW-0046">Antibiotic resistance</keyword>
<keyword id="KW-0441">Lipid A biosynthesis</keyword>
<keyword id="KW-0444">Lipid biosynthesis</keyword>
<keyword id="KW-0443">Lipid metabolism</keyword>
<keyword id="KW-0448">Lipopolysaccharide biosynthesis</keyword>
<keyword id="KW-0511">Multifunctional enzyme</keyword>
<keyword id="KW-0520">NAD</keyword>
<keyword id="KW-0560">Oxidoreductase</keyword>
<keyword id="KW-0808">Transferase</keyword>
<feature type="chain" id="PRO_1000137954" description="Bifunctional polymyxin resistance protein ArnA">
    <location>
        <begin position="1"/>
        <end position="667"/>
    </location>
</feature>
<feature type="region of interest" description="Formyltransferase ArnAFT">
    <location>
        <begin position="1"/>
        <end position="304"/>
    </location>
</feature>
<feature type="region of interest" description="Dehydrogenase ArnADH">
    <location>
        <begin position="314"/>
        <end position="667"/>
    </location>
</feature>
<feature type="active site" description="Proton donor; for formyltransferase activity" evidence="1">
    <location>
        <position position="104"/>
    </location>
</feature>
<feature type="active site" description="Proton acceptor; for decarboxylase activity" evidence="1">
    <location>
        <position position="434"/>
    </location>
</feature>
<feature type="active site" description="Proton donor; for decarboxylase activity" evidence="1">
    <location>
        <position position="619"/>
    </location>
</feature>
<feature type="binding site" evidence="1">
    <location>
        <position position="114"/>
    </location>
    <ligand>
        <name>(6R)-10-formyltetrahydrofolate</name>
        <dbReference type="ChEBI" id="CHEBI:195366"/>
    </ligand>
</feature>
<feature type="binding site" evidence="1">
    <location>
        <begin position="136"/>
        <end position="140"/>
    </location>
    <ligand>
        <name>(6R)-10-formyltetrahydrofolate</name>
        <dbReference type="ChEBI" id="CHEBI:195366"/>
    </ligand>
</feature>
<feature type="binding site" evidence="1">
    <location>
        <position position="347"/>
    </location>
    <ligand>
        <name>NAD(+)</name>
        <dbReference type="ChEBI" id="CHEBI:57540"/>
    </ligand>
</feature>
<feature type="binding site" evidence="1">
    <location>
        <begin position="368"/>
        <end position="369"/>
    </location>
    <ligand>
        <name>NAD(+)</name>
        <dbReference type="ChEBI" id="CHEBI:57540"/>
    </ligand>
</feature>
<feature type="binding site" evidence="1">
    <location>
        <position position="393"/>
    </location>
    <ligand>
        <name>UDP-alpha-D-glucuronate</name>
        <dbReference type="ChEBI" id="CHEBI:58052"/>
    </ligand>
</feature>
<feature type="binding site" evidence="1">
    <location>
        <position position="398"/>
    </location>
    <ligand>
        <name>UDP-alpha-D-glucuronate</name>
        <dbReference type="ChEBI" id="CHEBI:58052"/>
    </ligand>
</feature>
<feature type="binding site" evidence="1">
    <location>
        <begin position="432"/>
        <end position="433"/>
    </location>
    <ligand>
        <name>UDP-alpha-D-glucuronate</name>
        <dbReference type="ChEBI" id="CHEBI:58052"/>
    </ligand>
</feature>
<feature type="binding site" evidence="1">
    <location>
        <position position="460"/>
    </location>
    <ligand>
        <name>UDP-alpha-D-glucuronate</name>
        <dbReference type="ChEBI" id="CHEBI:58052"/>
    </ligand>
</feature>
<feature type="binding site" evidence="1">
    <location>
        <position position="492"/>
    </location>
    <ligand>
        <name>UDP-alpha-D-glucuronate</name>
        <dbReference type="ChEBI" id="CHEBI:58052"/>
    </ligand>
</feature>
<feature type="binding site" evidence="1">
    <location>
        <begin position="526"/>
        <end position="535"/>
    </location>
    <ligand>
        <name>UDP-alpha-D-glucuronate</name>
        <dbReference type="ChEBI" id="CHEBI:58052"/>
    </ligand>
</feature>
<feature type="binding site" evidence="1">
    <location>
        <position position="613"/>
    </location>
    <ligand>
        <name>UDP-alpha-D-glucuronate</name>
        <dbReference type="ChEBI" id="CHEBI:58052"/>
    </ligand>
</feature>
<feature type="site" description="Transition state stabilizer" evidence="1">
    <location>
        <position position="102"/>
    </location>
</feature>
<feature type="site" description="Raises pKa of active site His" evidence="1">
    <location>
        <position position="140"/>
    </location>
</feature>